<reference key="1">
    <citation type="journal article" date="2005" name="PLoS Biol.">
        <title>The genome sequence of Rickettsia felis identifies the first putative conjugative plasmid in an obligate intracellular parasite.</title>
        <authorList>
            <person name="Ogata H."/>
            <person name="Renesto P."/>
            <person name="Audic S."/>
            <person name="Robert C."/>
            <person name="Blanc G."/>
            <person name="Fournier P.-E."/>
            <person name="Parinello H."/>
            <person name="Claverie J.-M."/>
            <person name="Raoult D."/>
        </authorList>
    </citation>
    <scope>NUCLEOTIDE SEQUENCE [LARGE SCALE GENOMIC DNA]</scope>
    <source>
        <strain>ATCC VR-1525 / URRWXCal2</strain>
    </source>
</reference>
<gene>
    <name type="ordered locus">RF_0879</name>
</gene>
<name>Y879_RICFE</name>
<accession>Q4UL43</accession>
<feature type="chain" id="PRO_0000279869" description="UPF0416 protein RF_0879">
    <location>
        <begin position="1"/>
        <end position="113"/>
    </location>
</feature>
<evidence type="ECO:0000305" key="1"/>
<organism>
    <name type="scientific">Rickettsia felis (strain ATCC VR-1525 / URRWXCal2)</name>
    <name type="common">Rickettsia azadi</name>
    <dbReference type="NCBI Taxonomy" id="315456"/>
    <lineage>
        <taxon>Bacteria</taxon>
        <taxon>Pseudomonadati</taxon>
        <taxon>Pseudomonadota</taxon>
        <taxon>Alphaproteobacteria</taxon>
        <taxon>Rickettsiales</taxon>
        <taxon>Rickettsiaceae</taxon>
        <taxon>Rickettsieae</taxon>
        <taxon>Rickettsia</taxon>
        <taxon>spotted fever group</taxon>
    </lineage>
</organism>
<proteinExistence type="inferred from homology"/>
<sequence>MTGHAFGIVMPEVVKTVVGTAASAIYHYPTAVMATFVTAAVVASPENAAETVKNAACTVMKAAECAYHDVAGIVNVAAGVGHFVYDNLPSYGEMDLVGSDSMEAVIPWIGAVA</sequence>
<protein>
    <recommendedName>
        <fullName>UPF0416 protein RF_0879</fullName>
    </recommendedName>
</protein>
<comment type="similarity">
    <text evidence="1">Belongs to the UPF0416 family.</text>
</comment>
<dbReference type="EMBL" id="CP000053">
    <property type="protein sequence ID" value="AAY61730.1"/>
    <property type="molecule type" value="Genomic_DNA"/>
</dbReference>
<dbReference type="KEGG" id="rfe:RF_0879"/>
<dbReference type="HOGENOM" id="CLU_178535_0_0_5"/>
<dbReference type="OrthoDB" id="9868698at2"/>
<dbReference type="Proteomes" id="UP000008548">
    <property type="component" value="Chromosome"/>
</dbReference>